<name>ATE1_YEAST</name>
<evidence type="ECO:0000250" key="1"/>
<evidence type="ECO:0000269" key="2">
    <source>
    </source>
</evidence>
<evidence type="ECO:0000269" key="3">
    <source>
    </source>
</evidence>
<evidence type="ECO:0000305" key="4"/>
<evidence type="ECO:0000305" key="5">
    <source>
    </source>
</evidence>
<evidence type="ECO:0007829" key="6">
    <source>
        <dbReference type="PDB" id="7TIF"/>
    </source>
</evidence>
<evidence type="ECO:0007829" key="7">
    <source>
        <dbReference type="PDB" id="8E3S"/>
    </source>
</evidence>
<evidence type="ECO:0007829" key="8">
    <source>
        <dbReference type="PDB" id="8J6V"/>
    </source>
</evidence>
<protein>
    <recommendedName>
        <fullName>Arginyl-tRNA--protein transferase 1</fullName>
        <shortName>Arginyltransferase 1</shortName>
        <shortName>R-transferase 1</shortName>
        <ecNumber evidence="3">2.3.2.8</ecNumber>
    </recommendedName>
    <alternativeName>
        <fullName>Arginine-tRNA--protein transferase 1</fullName>
    </alternativeName>
</protein>
<sequence length="503" mass="57930">MSDRFVIWAPSMHNEPAAKCGYCHGNKGGNMDQLFALDSWAHRYMNKMDVVKIENCTIGSFVEHMDVATYDRMCNMGFRRSGKFLYKVDPLRNCCRLYTIRTAPQELNMTKELKKCISRFATRITSEDYCPAAVASSDFVGKIVNAEMNSKTFYTRFEPALYSEEKYHLFVKYQEKVHQDYNNSPKSFKRFLCDTPFGPEAVLGTQESWEQLNNWQRMKPGEKLKHMGPVHECYYYEGKLIAITVSDILPSGISSVYFIWDPDYSKWSLGKLSALRDLAIIQRTNLQYYYLGYYIEDCPKMNYKANYGAEVLDVCHSKYIPLKPIQDMISRGKLFVIGEEETKVTKELYLVDSETGRGEGFPTDNVVKYKNIAEEIYGVGGCAFKSANESALELKELYGIPYEEEDLDTIYHLKEHNGHAPNGIPNVVPGLLPLWELLDIMQSGKITDLEGRLFLFEIETEGIRPLINFYSEPPNVKKRICDVIRLFGFETCMKAVILYSEQM</sequence>
<accession>P16639</accession>
<accession>D6VUC0</accession>
<organism>
    <name type="scientific">Saccharomyces cerevisiae (strain ATCC 204508 / S288c)</name>
    <name type="common">Baker's yeast</name>
    <dbReference type="NCBI Taxonomy" id="559292"/>
    <lineage>
        <taxon>Eukaryota</taxon>
        <taxon>Fungi</taxon>
        <taxon>Dikarya</taxon>
        <taxon>Ascomycota</taxon>
        <taxon>Saccharomycotina</taxon>
        <taxon>Saccharomycetes</taxon>
        <taxon>Saccharomycetales</taxon>
        <taxon>Saccharomycetaceae</taxon>
        <taxon>Saccharomyces</taxon>
    </lineage>
</organism>
<feature type="chain" id="PRO_0000195092" description="Arginyl-tRNA--protein transferase 1">
    <location>
        <begin position="1"/>
        <end position="503"/>
    </location>
</feature>
<feature type="sequence conflict" description="In Ref. 1; AAA34439 and 2; AAD13904." evidence="4" ref="1 2">
    <original>T</original>
    <variation>S</variation>
    <location>
        <position position="122"/>
    </location>
</feature>
<feature type="sequence conflict" description="In Ref. 1; AAA34439." evidence="4" ref="1">
    <original>Y</original>
    <variation>I</variation>
    <location>
        <position position="402"/>
    </location>
</feature>
<feature type="strand" evidence="6">
    <location>
        <begin position="3"/>
        <end position="8"/>
    </location>
</feature>
<feature type="strand" evidence="6">
    <location>
        <begin position="11"/>
        <end position="14"/>
    </location>
</feature>
<feature type="helix" evidence="7">
    <location>
        <begin position="17"/>
        <end position="19"/>
    </location>
</feature>
<feature type="strand" evidence="7">
    <location>
        <begin position="21"/>
        <end position="23"/>
    </location>
</feature>
<feature type="helix" evidence="7">
    <location>
        <begin position="31"/>
        <end position="34"/>
    </location>
</feature>
<feature type="strand" evidence="7">
    <location>
        <begin position="35"/>
        <end position="37"/>
    </location>
</feature>
<feature type="helix" evidence="6">
    <location>
        <begin position="38"/>
        <end position="42"/>
    </location>
</feature>
<feature type="helix" evidence="6">
    <location>
        <begin position="48"/>
        <end position="50"/>
    </location>
</feature>
<feature type="strand" evidence="6">
    <location>
        <begin position="57"/>
        <end position="64"/>
    </location>
</feature>
<feature type="helix" evidence="6">
    <location>
        <begin position="67"/>
        <end position="74"/>
    </location>
</feature>
<feature type="turn" evidence="6">
    <location>
        <begin position="75"/>
        <end position="77"/>
    </location>
</feature>
<feature type="strand" evidence="6">
    <location>
        <begin position="79"/>
        <end position="81"/>
    </location>
</feature>
<feature type="strand" evidence="6">
    <location>
        <begin position="84"/>
        <end position="88"/>
    </location>
</feature>
<feature type="turn" evidence="6">
    <location>
        <begin position="90"/>
        <end position="92"/>
    </location>
</feature>
<feature type="strand" evidence="6">
    <location>
        <begin position="93"/>
        <end position="95"/>
    </location>
</feature>
<feature type="strand" evidence="6">
    <location>
        <begin position="100"/>
        <end position="102"/>
    </location>
</feature>
<feature type="helix" evidence="6">
    <location>
        <begin position="104"/>
        <end position="106"/>
    </location>
</feature>
<feature type="helix" evidence="6">
    <location>
        <begin position="111"/>
        <end position="124"/>
    </location>
</feature>
<feature type="helix" evidence="6">
    <location>
        <begin position="139"/>
        <end position="148"/>
    </location>
</feature>
<feature type="strand" evidence="6">
    <location>
        <begin position="150"/>
        <end position="158"/>
    </location>
</feature>
<feature type="helix" evidence="6">
    <location>
        <begin position="164"/>
        <end position="178"/>
    </location>
</feature>
<feature type="helix" evidence="6">
    <location>
        <begin position="185"/>
        <end position="192"/>
    </location>
</feature>
<feature type="helix" evidence="6">
    <location>
        <begin position="199"/>
        <end position="203"/>
    </location>
</feature>
<feature type="helix" evidence="6">
    <location>
        <begin position="206"/>
        <end position="212"/>
    </location>
</feature>
<feature type="helix" evidence="6">
    <location>
        <begin position="213"/>
        <end position="217"/>
    </location>
</feature>
<feature type="strand" evidence="6">
    <location>
        <begin position="228"/>
        <end position="236"/>
    </location>
</feature>
<feature type="strand" evidence="6">
    <location>
        <begin position="239"/>
        <end position="249"/>
    </location>
</feature>
<feature type="strand" evidence="6">
    <location>
        <begin position="252"/>
        <end position="260"/>
    </location>
</feature>
<feature type="helix" evidence="6">
    <location>
        <begin position="262"/>
        <end position="267"/>
    </location>
</feature>
<feature type="helix" evidence="6">
    <location>
        <begin position="269"/>
        <end position="283"/>
    </location>
</feature>
<feature type="strand" evidence="6">
    <location>
        <begin position="288"/>
        <end position="290"/>
    </location>
</feature>
<feature type="turn" evidence="7">
    <location>
        <begin position="299"/>
        <end position="301"/>
    </location>
</feature>
<feature type="helix" evidence="7">
    <location>
        <begin position="302"/>
        <end position="305"/>
    </location>
</feature>
<feature type="strand" evidence="6">
    <location>
        <begin position="310"/>
        <end position="313"/>
    </location>
</feature>
<feature type="turn" evidence="6">
    <location>
        <begin position="314"/>
        <end position="317"/>
    </location>
</feature>
<feature type="strand" evidence="6">
    <location>
        <begin position="318"/>
        <end position="322"/>
    </location>
</feature>
<feature type="helix" evidence="6">
    <location>
        <begin position="323"/>
        <end position="325"/>
    </location>
</feature>
<feature type="helix" evidence="6">
    <location>
        <begin position="326"/>
        <end position="329"/>
    </location>
</feature>
<feature type="turn" evidence="6">
    <location>
        <begin position="330"/>
        <end position="332"/>
    </location>
</feature>
<feature type="strand" evidence="8">
    <location>
        <begin position="345"/>
        <end position="347"/>
    </location>
</feature>
<feature type="turn" evidence="6">
    <location>
        <begin position="352"/>
        <end position="356"/>
    </location>
</feature>
<feature type="strand" evidence="7">
    <location>
        <begin position="357"/>
        <end position="359"/>
    </location>
</feature>
<feature type="strand" evidence="7">
    <location>
        <begin position="365"/>
        <end position="367"/>
    </location>
</feature>
<feature type="helix" evidence="6">
    <location>
        <begin position="373"/>
        <end position="377"/>
    </location>
</feature>
<feature type="helix" evidence="6">
    <location>
        <begin position="383"/>
        <end position="398"/>
    </location>
</feature>
<feature type="turn" evidence="7">
    <location>
        <begin position="407"/>
        <end position="410"/>
    </location>
</feature>
<feature type="helix" evidence="7">
    <location>
        <begin position="414"/>
        <end position="417"/>
    </location>
</feature>
<feature type="helix" evidence="6">
    <location>
        <begin position="434"/>
        <end position="443"/>
    </location>
</feature>
<feature type="helix" evidence="6">
    <location>
        <begin position="445"/>
        <end position="449"/>
    </location>
</feature>
<feature type="turn" evidence="6">
    <location>
        <begin position="450"/>
        <end position="452"/>
    </location>
</feature>
<feature type="strand" evidence="6">
    <location>
        <begin position="454"/>
        <end position="457"/>
    </location>
</feature>
<feature type="strand" evidence="6">
    <location>
        <begin position="460"/>
        <end position="462"/>
    </location>
</feature>
<feature type="helix" evidence="6">
    <location>
        <begin position="469"/>
        <end position="471"/>
    </location>
</feature>
<feature type="helix" evidence="6">
    <location>
        <begin position="474"/>
        <end position="487"/>
    </location>
</feature>
<feature type="helix" evidence="6">
    <location>
        <begin position="489"/>
        <end position="492"/>
    </location>
</feature>
<feature type="strand" evidence="6">
    <location>
        <begin position="495"/>
        <end position="499"/>
    </location>
</feature>
<dbReference type="EC" id="2.3.2.8" evidence="3"/>
<dbReference type="EMBL" id="J05404">
    <property type="protein sequence ID" value="AAA34439.1"/>
    <property type="molecule type" value="Genomic_DNA"/>
</dbReference>
<dbReference type="EMBL" id="S58126">
    <property type="protein sequence ID" value="AAD13904.1"/>
    <property type="molecule type" value="Genomic_DNA"/>
</dbReference>
<dbReference type="EMBL" id="Z72539">
    <property type="protein sequence ID" value="CAA96717.1"/>
    <property type="molecule type" value="Genomic_DNA"/>
</dbReference>
<dbReference type="EMBL" id="BK006941">
    <property type="protein sequence ID" value="DAA08081.1"/>
    <property type="molecule type" value="Genomic_DNA"/>
</dbReference>
<dbReference type="PIR" id="S64019">
    <property type="entry name" value="S64019"/>
</dbReference>
<dbReference type="RefSeq" id="NP_011498.1">
    <property type="nucleotide sequence ID" value="NM_001180882.1"/>
</dbReference>
<dbReference type="PDB" id="7TIF">
    <property type="method" value="X-ray"/>
    <property type="resolution" value="2.85 A"/>
    <property type="chains" value="A/B/C/D/E/F/G/H/I/J/K/L=1-503"/>
</dbReference>
<dbReference type="PDB" id="8E3S">
    <property type="method" value="EM"/>
    <property type="resolution" value="3.10 A"/>
    <property type="chains" value="A=1-503"/>
</dbReference>
<dbReference type="PDB" id="8FZR">
    <property type="method" value="EM"/>
    <property type="resolution" value="3.60 A"/>
    <property type="chains" value="A=1-503"/>
</dbReference>
<dbReference type="PDB" id="8J6V">
    <property type="method" value="X-ray"/>
    <property type="resolution" value="3.40 A"/>
    <property type="chains" value="A/B/C/D/E/F/G/H/I/J/K/L=1-503"/>
</dbReference>
<dbReference type="PDBsum" id="7TIF"/>
<dbReference type="PDBsum" id="8E3S"/>
<dbReference type="PDBsum" id="8FZR"/>
<dbReference type="PDBsum" id="8J6V"/>
<dbReference type="EMDB" id="EMD-27871"/>
<dbReference type="EMDB" id="EMD-29638"/>
<dbReference type="SASBDB" id="P16639"/>
<dbReference type="SMR" id="P16639"/>
<dbReference type="BioGRID" id="33229">
    <property type="interactions" value="36"/>
</dbReference>
<dbReference type="DIP" id="DIP-6572N"/>
<dbReference type="FunCoup" id="P16639">
    <property type="interactions" value="733"/>
</dbReference>
<dbReference type="IntAct" id="P16639">
    <property type="interactions" value="6"/>
</dbReference>
<dbReference type="MINT" id="P16639"/>
<dbReference type="STRING" id="4932.YGL017W"/>
<dbReference type="iPTMnet" id="P16639"/>
<dbReference type="PaxDb" id="4932-YGL017W"/>
<dbReference type="PeptideAtlas" id="P16639"/>
<dbReference type="EnsemblFungi" id="YGL017W_mRNA">
    <property type="protein sequence ID" value="YGL017W"/>
    <property type="gene ID" value="YGL017W"/>
</dbReference>
<dbReference type="GeneID" id="852867"/>
<dbReference type="KEGG" id="sce:YGL017W"/>
<dbReference type="AGR" id="SGD:S000002985"/>
<dbReference type="SGD" id="S000002985">
    <property type="gene designation" value="ATE1"/>
</dbReference>
<dbReference type="VEuPathDB" id="FungiDB:YGL017W"/>
<dbReference type="eggNOG" id="KOG1193">
    <property type="taxonomic scope" value="Eukaryota"/>
</dbReference>
<dbReference type="GeneTree" id="ENSGT00500000044926"/>
<dbReference type="HOGENOM" id="CLU_020349_2_2_1"/>
<dbReference type="InParanoid" id="P16639"/>
<dbReference type="OMA" id="RNCCRLY"/>
<dbReference type="OrthoDB" id="74183at2759"/>
<dbReference type="BioCyc" id="YEAST:YGL017W-MONOMER"/>
<dbReference type="BioGRID-ORCS" id="852867">
    <property type="hits" value="10 hits in 10 CRISPR screens"/>
</dbReference>
<dbReference type="PRO" id="PR:P16639"/>
<dbReference type="Proteomes" id="UP000002311">
    <property type="component" value="Chromosome VII"/>
</dbReference>
<dbReference type="RNAct" id="P16639">
    <property type="molecule type" value="protein"/>
</dbReference>
<dbReference type="GO" id="GO:0005737">
    <property type="term" value="C:cytoplasm"/>
    <property type="evidence" value="ECO:0007005"/>
    <property type="project" value="SGD"/>
</dbReference>
<dbReference type="GO" id="GO:0004057">
    <property type="term" value="F:arginyl-tRNA--protein transferase activity"/>
    <property type="evidence" value="ECO:0000314"/>
    <property type="project" value="SGD"/>
</dbReference>
<dbReference type="GO" id="GO:0010498">
    <property type="term" value="P:proteasomal protein catabolic process"/>
    <property type="evidence" value="ECO:0000318"/>
    <property type="project" value="GO_Central"/>
</dbReference>
<dbReference type="InterPro" id="IPR016181">
    <property type="entry name" value="Acyl_CoA_acyltransferase"/>
</dbReference>
<dbReference type="InterPro" id="IPR030700">
    <property type="entry name" value="N-end_Aminoacyl_Trfase"/>
</dbReference>
<dbReference type="InterPro" id="IPR007472">
    <property type="entry name" value="N-end_Aminoacyl_Trfase_C"/>
</dbReference>
<dbReference type="InterPro" id="IPR007471">
    <property type="entry name" value="N-end_Aminoacyl_Trfase_N"/>
</dbReference>
<dbReference type="PANTHER" id="PTHR21367">
    <property type="entry name" value="ARGININE-TRNA-PROTEIN TRANSFERASE 1"/>
    <property type="match status" value="1"/>
</dbReference>
<dbReference type="PANTHER" id="PTHR21367:SF1">
    <property type="entry name" value="ARGINYL-TRNA--PROTEIN TRANSFERASE 1"/>
    <property type="match status" value="1"/>
</dbReference>
<dbReference type="Pfam" id="PF04377">
    <property type="entry name" value="ATE_C"/>
    <property type="match status" value="1"/>
</dbReference>
<dbReference type="Pfam" id="PF04376">
    <property type="entry name" value="ATE_N"/>
    <property type="match status" value="1"/>
</dbReference>
<dbReference type="SUPFAM" id="SSF55729">
    <property type="entry name" value="Acyl-CoA N-acyltransferases (Nat)"/>
    <property type="match status" value="1"/>
</dbReference>
<gene>
    <name type="primary">ATE1</name>
    <name type="ordered locus">YGL017W</name>
</gene>
<proteinExistence type="evidence at protein level"/>
<comment type="function">
    <text evidence="1 3">Involved in the post-translational conjugation of arginine to the N-terminal aspartate or glutamate of a protein. This arginylation is required for degradation of the protein via the ubiquitin pathway (PubMed:2185248). Does not arginylate cysteine residues (By similarity).</text>
</comment>
<comment type="catalytic activity">
    <reaction evidence="3">
        <text>an N-terminal L-alpha-aminoacyl-[protein] + L-arginyl-tRNA(Arg) = an N-terminal L-arginyl-L-aminoacyl-[protein] + tRNA(Arg) + H(+)</text>
        <dbReference type="Rhea" id="RHEA:10208"/>
        <dbReference type="Rhea" id="RHEA-COMP:9658"/>
        <dbReference type="Rhea" id="RHEA-COMP:9673"/>
        <dbReference type="Rhea" id="RHEA-COMP:10636"/>
        <dbReference type="Rhea" id="RHEA-COMP:10638"/>
        <dbReference type="ChEBI" id="CHEBI:15378"/>
        <dbReference type="ChEBI" id="CHEBI:78442"/>
        <dbReference type="ChEBI" id="CHEBI:78513"/>
        <dbReference type="ChEBI" id="CHEBI:78597"/>
        <dbReference type="ChEBI" id="CHEBI:83562"/>
        <dbReference type="EC" id="2.3.2.8"/>
    </reaction>
    <physiologicalReaction direction="left-to-right" evidence="5">
        <dbReference type="Rhea" id="RHEA:10209"/>
    </physiologicalReaction>
</comment>
<comment type="subcellular location">
    <subcellularLocation>
        <location>Cytoplasm</location>
    </subcellularLocation>
</comment>
<comment type="miscellaneous">
    <text evidence="2">Present with 2030 molecules/cell in log phase SD medium.</text>
</comment>
<comment type="similarity">
    <text evidence="4">Belongs to the R-transferase family.</text>
</comment>
<reference key="1">
    <citation type="journal article" date="1990" name="J. Biol. Chem.">
        <title>Cloning and functional analysis of the arginyl-tRNA-protein transferase gene ATE1 of Saccharomyces cerevisiae.</title>
        <authorList>
            <person name="Balzi E."/>
            <person name="Choder M."/>
            <person name="Chen W."/>
            <person name="Varshavsky A."/>
            <person name="Goffeau A."/>
        </authorList>
    </citation>
    <scope>NUCLEOTIDE SEQUENCE [GENOMIC DNA]</scope>
    <scope>FUNCTION</scope>
    <scope>CATALYTIC ACTIVITY</scope>
</reference>
<reference key="2">
    <citation type="journal article" date="1991" name="Yeast">
        <title>The DNA sequencing of the 17 kb HindIII fragment spanning the LEU1 and ATE1 loci on chromosome VII from Saccharomyces cerevisiae reveals the PDR6 gene, a new member of the genetic network controlling pleiotropic drug resistance.</title>
        <authorList>
            <person name="Chen W."/>
            <person name="Balzi E."/>
            <person name="Capieaux E."/>
            <person name="Choder M."/>
            <person name="Goffeau A."/>
        </authorList>
    </citation>
    <scope>NUCLEOTIDE SEQUENCE [GENOMIC DNA]</scope>
    <source>
        <strain>ATCC 46191 / IL125-2B</strain>
    </source>
</reference>
<reference key="3">
    <citation type="journal article" date="1997" name="Nature">
        <title>The nucleotide sequence of Saccharomyces cerevisiae chromosome VII.</title>
        <authorList>
            <person name="Tettelin H."/>
            <person name="Agostoni-Carbone M.L."/>
            <person name="Albermann K."/>
            <person name="Albers M."/>
            <person name="Arroyo J."/>
            <person name="Backes U."/>
            <person name="Barreiros T."/>
            <person name="Bertani I."/>
            <person name="Bjourson A.J."/>
            <person name="Brueckner M."/>
            <person name="Bruschi C.V."/>
            <person name="Carignani G."/>
            <person name="Castagnoli L."/>
            <person name="Cerdan E."/>
            <person name="Clemente M.L."/>
            <person name="Coblenz A."/>
            <person name="Coglievina M."/>
            <person name="Coissac E."/>
            <person name="Defoor E."/>
            <person name="Del Bino S."/>
            <person name="Delius H."/>
            <person name="Delneri D."/>
            <person name="de Wergifosse P."/>
            <person name="Dujon B."/>
            <person name="Durand P."/>
            <person name="Entian K.-D."/>
            <person name="Eraso P."/>
            <person name="Escribano V."/>
            <person name="Fabiani L."/>
            <person name="Fartmann B."/>
            <person name="Feroli F."/>
            <person name="Feuermann M."/>
            <person name="Frontali L."/>
            <person name="Garcia-Gonzalez M."/>
            <person name="Garcia-Saez M.I."/>
            <person name="Goffeau A."/>
            <person name="Guerreiro P."/>
            <person name="Hani J."/>
            <person name="Hansen M."/>
            <person name="Hebling U."/>
            <person name="Hernandez K."/>
            <person name="Heumann K."/>
            <person name="Hilger F."/>
            <person name="Hofmann B."/>
            <person name="Indge K.J."/>
            <person name="James C.M."/>
            <person name="Klima R."/>
            <person name="Koetter P."/>
            <person name="Kramer B."/>
            <person name="Kramer W."/>
            <person name="Lauquin G."/>
            <person name="Leuther H."/>
            <person name="Louis E.J."/>
            <person name="Maillier E."/>
            <person name="Marconi A."/>
            <person name="Martegani E."/>
            <person name="Mazon M.J."/>
            <person name="Mazzoni C."/>
            <person name="McReynolds A.D.K."/>
            <person name="Melchioretto P."/>
            <person name="Mewes H.-W."/>
            <person name="Minenkova O."/>
            <person name="Mueller-Auer S."/>
            <person name="Nawrocki A."/>
            <person name="Netter P."/>
            <person name="Neu R."/>
            <person name="Nombela C."/>
            <person name="Oliver S.G."/>
            <person name="Panzeri L."/>
            <person name="Paoluzi S."/>
            <person name="Plevani P."/>
            <person name="Portetelle D."/>
            <person name="Portillo F."/>
            <person name="Potier S."/>
            <person name="Purnelle B."/>
            <person name="Rieger M."/>
            <person name="Riles L."/>
            <person name="Rinaldi T."/>
            <person name="Robben J."/>
            <person name="Rodrigues-Pousada C."/>
            <person name="Rodriguez-Belmonte E."/>
            <person name="Rodriguez-Torres A.M."/>
            <person name="Rose M."/>
            <person name="Ruzzi M."/>
            <person name="Saliola M."/>
            <person name="Sanchez-Perez M."/>
            <person name="Schaefer B."/>
            <person name="Schaefer M."/>
            <person name="Scharfe M."/>
            <person name="Schmidheini T."/>
            <person name="Schreer A."/>
            <person name="Skala J."/>
            <person name="Souciet J.-L."/>
            <person name="Steensma H.Y."/>
            <person name="Talla E."/>
            <person name="Thierry A."/>
            <person name="Vandenbol M."/>
            <person name="van der Aart Q.J.M."/>
            <person name="Van Dyck L."/>
            <person name="Vanoni M."/>
            <person name="Verhasselt P."/>
            <person name="Voet M."/>
            <person name="Volckaert G."/>
            <person name="Wambutt R."/>
            <person name="Watson M.D."/>
            <person name="Weber N."/>
            <person name="Wedler E."/>
            <person name="Wedler H."/>
            <person name="Wipfli P."/>
            <person name="Wolf K."/>
            <person name="Wright L.F."/>
            <person name="Zaccaria P."/>
            <person name="Zimmermann M."/>
            <person name="Zollner A."/>
            <person name="Kleine K."/>
        </authorList>
    </citation>
    <scope>NUCLEOTIDE SEQUENCE [LARGE SCALE GENOMIC DNA]</scope>
    <source>
        <strain>ATCC 204508 / S288c</strain>
    </source>
</reference>
<reference key="4">
    <citation type="journal article" date="2014" name="G3 (Bethesda)">
        <title>The reference genome sequence of Saccharomyces cerevisiae: Then and now.</title>
        <authorList>
            <person name="Engel S.R."/>
            <person name="Dietrich F.S."/>
            <person name="Fisk D.G."/>
            <person name="Binkley G."/>
            <person name="Balakrishnan R."/>
            <person name="Costanzo M.C."/>
            <person name="Dwight S.S."/>
            <person name="Hitz B.C."/>
            <person name="Karra K."/>
            <person name="Nash R.S."/>
            <person name="Weng S."/>
            <person name="Wong E.D."/>
            <person name="Lloyd P."/>
            <person name="Skrzypek M.S."/>
            <person name="Miyasato S.R."/>
            <person name="Simison M."/>
            <person name="Cherry J.M."/>
        </authorList>
    </citation>
    <scope>GENOME REANNOTATION</scope>
    <source>
        <strain>ATCC 204508 / S288c</strain>
    </source>
</reference>
<reference key="5">
    <citation type="journal article" date="2003" name="Nature">
        <title>Global analysis of protein expression in yeast.</title>
        <authorList>
            <person name="Ghaemmaghami S."/>
            <person name="Huh W.-K."/>
            <person name="Bower K."/>
            <person name="Howson R.W."/>
            <person name="Belle A."/>
            <person name="Dephoure N."/>
            <person name="O'Shea E.K."/>
            <person name="Weissman J.S."/>
        </authorList>
    </citation>
    <scope>LEVEL OF PROTEIN EXPRESSION [LARGE SCALE ANALYSIS]</scope>
</reference>
<keyword id="KW-0002">3D-structure</keyword>
<keyword id="KW-0012">Acyltransferase</keyword>
<keyword id="KW-0963">Cytoplasm</keyword>
<keyword id="KW-1185">Reference proteome</keyword>
<keyword id="KW-0808">Transferase</keyword>
<keyword id="KW-0833">Ubl conjugation pathway</keyword>